<comment type="function">
    <text evidence="3">Ionotropic glutamate receptor that functions as a cation-permeable ligand-gated ion channel, gated by L-glutamate and the glutamatergic agonist kainic acid. L-glutamate acts as an excitatory neurotransmitter at many synapses in the central nervous system. Binding of the excitatory neurotransmitter L-glutamate induces a conformation change, leading to the opening of the cation channel, and thereby converts the chemical signal to an electrical impulse. The receptor then desensitizes rapidly and enters a transient inactive state, characterized by the presence of bound agonist.</text>
</comment>
<comment type="function">
    <text evidence="1 6">Independent of its ionotropic glutamate receptor activity, acts as a thermoreceptor conferring sensitivity to cold temperatures (PubMed:31474366). Functions in dorsal root ganglion neurons (By similarity).</text>
</comment>
<comment type="catalytic activity">
    <reaction evidence="3">
        <text>Ca(2+)(in) = Ca(2+)(out)</text>
        <dbReference type="Rhea" id="RHEA:29671"/>
        <dbReference type="ChEBI" id="CHEBI:29108"/>
    </reaction>
</comment>
<comment type="catalytic activity">
    <reaction evidence="3">
        <text>Na(+)(in) = Na(+)(out)</text>
        <dbReference type="Rhea" id="RHEA:34963"/>
        <dbReference type="ChEBI" id="CHEBI:29101"/>
    </reaction>
</comment>
<comment type="activity regulation">
    <text evidence="6">Cold receptor activity activated by temperatures between 10-19 degrees Celsius.</text>
</comment>
<comment type="subunit">
    <text evidence="2">Homotetramer and heterotetramer with GRIK5. Tetramers may be formed by the dimerization of dimers.</text>
</comment>
<comment type="subcellular location">
    <subcellularLocation>
        <location evidence="2">Cell membrane</location>
        <topology evidence="4">Multi-pass membrane protein</topology>
    </subcellularLocation>
    <subcellularLocation>
        <location evidence="2">Postsynaptic cell membrane</location>
        <topology evidence="4">Multi-pass membrane protein</topology>
    </subcellularLocation>
</comment>
<comment type="similarity">
    <text evidence="8">Belongs to the glutamate-gated ion channel (TC 1.A.10.1) family. GRIK2 subfamily.</text>
</comment>
<sequence>MQRIAGITKMVTHRRWLGLLLLLLCVGYSHGMPHVLRFGGIFESIESGPSGAEELAFKFALNTINRNRTLLPNTTLTYDIQRINIHDSFEASRKACDQLSLGVAAIFGPSHSSSANAVQSICNALGVPHIQTKWKHQVSDNRDSFYVNLYPDFSSLSRAILDLVHFFKWKTVTVVYDDSTGLIRLQELIKAPSRYNIRLKIRQLPADTKDAKPLLKEMKRGKEFHVIFDCGHEMAAGILKQALAMGMMTEYYHYIFTTLDLFALDVEPYRYSGVNMTGFRILNTENSQVSSIIEKWSMERLQAPPKPDSGLLDGFMTTDAALMYDAVHVVAVAVQQSPQITVSSLQCNRHKPWRFGNRFMTLIKEAHWDGLTGRINFNRTNGLRTDFDLDVISLKEEGLEKIGTWDPASGLNMTENQKGKTANVTDSLSNRSLVVSTILEEPYVMFKKSDKPLYGNDRFEGYCVDLLRELAAILGFGYELRLVEDGRYGAQDESSGQWNGMVRELMDHKADLAVAPLAITYVREKVIDFSKPFMTLGISILYRKPNGTNPGVFSFLNPLSPDIWMYILLAYLGVSCVLFVIARFSPYEWYNPHPCNPDSDVVENNFTLLNSFWFGVGALMQQGSELMPKALSTRIVGGIWWFFTLIIISSYTANLAAFLTVERMESPIDSADDLAKQTKIEYGVVEDGSTMTFFKKTKISTYDKMWEFMSSRRHSVMVKSIEEGIERVLTSDYAFLMESTTIEFVTQRNCNLTQIGGLIDSKAYGVGTPMGSPYRDKITIAILQLQEEGKLHMMKEKWWRGNGCPEEENKEASALGVQNIGGIFIVLAAGLVLSVFVAVGEFLYKSKQNAQLEKRSFCSAMVDELRVSLKCQRRLKHKPQPPVMVKTDEVINMHTFNDRRLPGKETMA</sequence>
<reference evidence="10" key="1">
    <citation type="journal article" date="2013" name="Nature">
        <title>The zebrafish reference genome sequence and its relationship to the human genome.</title>
        <authorList>
            <person name="Howe K."/>
            <person name="Clark M.D."/>
            <person name="Torroja C.F."/>
            <person name="Torrance J."/>
            <person name="Berthelot C."/>
            <person name="Muffato M."/>
            <person name="Collins J.E."/>
            <person name="Humphray S."/>
            <person name="McLaren K."/>
            <person name="Matthews L."/>
            <person name="McLaren S."/>
            <person name="Sealy I."/>
            <person name="Caccamo M."/>
            <person name="Churcher C."/>
            <person name="Scott C."/>
            <person name="Barrett J.C."/>
            <person name="Koch R."/>
            <person name="Rauch G.J."/>
            <person name="White S."/>
            <person name="Chow W."/>
            <person name="Kilian B."/>
            <person name="Quintais L.T."/>
            <person name="Guerra-Assuncao J.A."/>
            <person name="Zhou Y."/>
            <person name="Gu Y."/>
            <person name="Yen J."/>
            <person name="Vogel J.H."/>
            <person name="Eyre T."/>
            <person name="Redmond S."/>
            <person name="Banerjee R."/>
            <person name="Chi J."/>
            <person name="Fu B."/>
            <person name="Langley E."/>
            <person name="Maguire S.F."/>
            <person name="Laird G.K."/>
            <person name="Lloyd D."/>
            <person name="Kenyon E."/>
            <person name="Donaldson S."/>
            <person name="Sehra H."/>
            <person name="Almeida-King J."/>
            <person name="Loveland J."/>
            <person name="Trevanion S."/>
            <person name="Jones M."/>
            <person name="Quail M."/>
            <person name="Willey D."/>
            <person name="Hunt A."/>
            <person name="Burton J."/>
            <person name="Sims S."/>
            <person name="McLay K."/>
            <person name="Plumb B."/>
            <person name="Davis J."/>
            <person name="Clee C."/>
            <person name="Oliver K."/>
            <person name="Clark R."/>
            <person name="Riddle C."/>
            <person name="Elliot D."/>
            <person name="Threadgold G."/>
            <person name="Harden G."/>
            <person name="Ware D."/>
            <person name="Begum S."/>
            <person name="Mortimore B."/>
            <person name="Kerry G."/>
            <person name="Heath P."/>
            <person name="Phillimore B."/>
            <person name="Tracey A."/>
            <person name="Corby N."/>
            <person name="Dunn M."/>
            <person name="Johnson C."/>
            <person name="Wood J."/>
            <person name="Clark S."/>
            <person name="Pelan S."/>
            <person name="Griffiths G."/>
            <person name="Smith M."/>
            <person name="Glithero R."/>
            <person name="Howden P."/>
            <person name="Barker N."/>
            <person name="Lloyd C."/>
            <person name="Stevens C."/>
            <person name="Harley J."/>
            <person name="Holt K."/>
            <person name="Panagiotidis G."/>
            <person name="Lovell J."/>
            <person name="Beasley H."/>
            <person name="Henderson C."/>
            <person name="Gordon D."/>
            <person name="Auger K."/>
            <person name="Wright D."/>
            <person name="Collins J."/>
            <person name="Raisen C."/>
            <person name="Dyer L."/>
            <person name="Leung K."/>
            <person name="Robertson L."/>
            <person name="Ambridge K."/>
            <person name="Leongamornlert D."/>
            <person name="McGuire S."/>
            <person name="Gilderthorp R."/>
            <person name="Griffiths C."/>
            <person name="Manthravadi D."/>
            <person name="Nichol S."/>
            <person name="Barker G."/>
            <person name="Whitehead S."/>
            <person name="Kay M."/>
            <person name="Brown J."/>
            <person name="Murnane C."/>
            <person name="Gray E."/>
            <person name="Humphries M."/>
            <person name="Sycamore N."/>
            <person name="Barker D."/>
            <person name="Saunders D."/>
            <person name="Wallis J."/>
            <person name="Babbage A."/>
            <person name="Hammond S."/>
            <person name="Mashreghi-Mohammadi M."/>
            <person name="Barr L."/>
            <person name="Martin S."/>
            <person name="Wray P."/>
            <person name="Ellington A."/>
            <person name="Matthews N."/>
            <person name="Ellwood M."/>
            <person name="Woodmansey R."/>
            <person name="Clark G."/>
            <person name="Cooper J."/>
            <person name="Tromans A."/>
            <person name="Grafham D."/>
            <person name="Skuce C."/>
            <person name="Pandian R."/>
            <person name="Andrews R."/>
            <person name="Harrison E."/>
            <person name="Kimberley A."/>
            <person name="Garnett J."/>
            <person name="Fosker N."/>
            <person name="Hall R."/>
            <person name="Garner P."/>
            <person name="Kelly D."/>
            <person name="Bird C."/>
            <person name="Palmer S."/>
            <person name="Gehring I."/>
            <person name="Berger A."/>
            <person name="Dooley C.M."/>
            <person name="Ersan-Urun Z."/>
            <person name="Eser C."/>
            <person name="Geiger H."/>
            <person name="Geisler M."/>
            <person name="Karotki L."/>
            <person name="Kirn A."/>
            <person name="Konantz J."/>
            <person name="Konantz M."/>
            <person name="Oberlander M."/>
            <person name="Rudolph-Geiger S."/>
            <person name="Teucke M."/>
            <person name="Lanz C."/>
            <person name="Raddatz G."/>
            <person name="Osoegawa K."/>
            <person name="Zhu B."/>
            <person name="Rapp A."/>
            <person name="Widaa S."/>
            <person name="Langford C."/>
            <person name="Yang F."/>
            <person name="Schuster S.C."/>
            <person name="Carter N.P."/>
            <person name="Harrow J."/>
            <person name="Ning Z."/>
            <person name="Herrero J."/>
            <person name="Searle S.M."/>
            <person name="Enright A."/>
            <person name="Geisler R."/>
            <person name="Plasterk R.H."/>
            <person name="Lee C."/>
            <person name="Westerfield M."/>
            <person name="de Jong P.J."/>
            <person name="Zon L.I."/>
            <person name="Postlethwait J.H."/>
            <person name="Nusslein-Volhard C."/>
            <person name="Hubbard T.J."/>
            <person name="Roest Crollius H."/>
            <person name="Rogers J."/>
            <person name="Stemple D.L."/>
        </authorList>
    </citation>
    <scope>NUCLEOTIDE SEQUENCE [LARGE SCALE GENOMIC DNA]</scope>
    <source>
        <strain evidence="10">Tuebingen</strain>
    </source>
</reference>
<reference evidence="8" key="2">
    <citation type="journal article" date="2019" name="Cell">
        <title>A Cold-Sensing Receptor Encoded by a Glutamate Receptor Gene.</title>
        <authorList>
            <person name="Gong J."/>
            <person name="Liu J."/>
            <person name="Ronan E.A."/>
            <person name="He F."/>
            <person name="Cai W."/>
            <person name="Fatima M."/>
            <person name="Zhang W."/>
            <person name="Lee H."/>
            <person name="Li Z."/>
            <person name="Kim G.H."/>
            <person name="Pipe K.P."/>
            <person name="Duan B."/>
            <person name="Liu J."/>
            <person name="Xu X.Z.S."/>
        </authorList>
    </citation>
    <scope>FUNCTION</scope>
    <scope>ACTIVITY REGULATION</scope>
</reference>
<evidence type="ECO:0000250" key="1">
    <source>
        <dbReference type="UniProtKB" id="P39087"/>
    </source>
</evidence>
<evidence type="ECO:0000250" key="2">
    <source>
        <dbReference type="UniProtKB" id="P42260"/>
    </source>
</evidence>
<evidence type="ECO:0000250" key="3">
    <source>
        <dbReference type="UniProtKB" id="Q13002"/>
    </source>
</evidence>
<evidence type="ECO:0000255" key="4"/>
<evidence type="ECO:0000255" key="5">
    <source>
        <dbReference type="PROSITE-ProRule" id="PRU00498"/>
    </source>
</evidence>
<evidence type="ECO:0000269" key="6">
    <source>
    </source>
</evidence>
<evidence type="ECO:0000303" key="7">
    <source>
    </source>
</evidence>
<evidence type="ECO:0000305" key="8"/>
<evidence type="ECO:0000312" key="9">
    <source>
        <dbReference type="EMBL" id="LO018531"/>
    </source>
</evidence>
<evidence type="ECO:0000312" key="10">
    <source>
        <dbReference type="Proteomes" id="UP000000437"/>
    </source>
</evidence>
<name>GRIK2_DANRE</name>
<feature type="signal peptide" evidence="4">
    <location>
        <begin position="1"/>
        <end position="31"/>
    </location>
</feature>
<feature type="chain" id="PRO_5022361179" description="Glutamate receptor ionotropic, kainate 2" evidence="4">
    <location>
        <begin position="32"/>
        <end position="908"/>
    </location>
</feature>
<feature type="topological domain" description="Extracellular" evidence="2">
    <location>
        <begin position="32"/>
        <end position="561"/>
    </location>
</feature>
<feature type="transmembrane region" description="Helical" evidence="4">
    <location>
        <begin position="562"/>
        <end position="582"/>
    </location>
</feature>
<feature type="topological domain" description="Cytoplasmic" evidence="2">
    <location>
        <begin position="583"/>
        <end position="638"/>
    </location>
</feature>
<feature type="transmembrane region" description="Helical" evidence="4">
    <location>
        <begin position="639"/>
        <end position="659"/>
    </location>
</feature>
<feature type="topological domain" description="Extracellular" evidence="2">
    <location>
        <begin position="660"/>
        <end position="819"/>
    </location>
</feature>
<feature type="transmembrane region" description="Helical" evidence="4">
    <location>
        <begin position="820"/>
        <end position="840"/>
    </location>
</feature>
<feature type="topological domain" description="Cytoplasmic" evidence="2">
    <location>
        <begin position="841"/>
        <end position="908"/>
    </location>
</feature>
<feature type="binding site" evidence="2">
    <location>
        <position position="516"/>
    </location>
    <ligand>
        <name>L-glutamate</name>
        <dbReference type="ChEBI" id="CHEBI:29985"/>
    </ligand>
</feature>
<feature type="binding site" evidence="2">
    <location>
        <position position="518"/>
    </location>
    <ligand>
        <name>L-glutamate</name>
        <dbReference type="ChEBI" id="CHEBI:29985"/>
    </ligand>
</feature>
<feature type="binding site" evidence="2">
    <location>
        <position position="523"/>
    </location>
    <ligand>
        <name>L-glutamate</name>
        <dbReference type="ChEBI" id="CHEBI:29985"/>
    </ligand>
</feature>
<feature type="binding site" evidence="2">
    <location>
        <position position="689"/>
    </location>
    <ligand>
        <name>L-glutamate</name>
        <dbReference type="ChEBI" id="CHEBI:29985"/>
    </ligand>
</feature>
<feature type="binding site" evidence="2">
    <location>
        <position position="690"/>
    </location>
    <ligand>
        <name>L-glutamate</name>
        <dbReference type="ChEBI" id="CHEBI:29985"/>
    </ligand>
</feature>
<feature type="binding site" evidence="2">
    <location>
        <position position="738"/>
    </location>
    <ligand>
        <name>L-glutamate</name>
        <dbReference type="ChEBI" id="CHEBI:29985"/>
    </ligand>
</feature>
<feature type="glycosylation site" description="N-linked (GlcNAc...) asparagine" evidence="5">
    <location>
        <position position="67"/>
    </location>
</feature>
<feature type="glycosylation site" description="N-linked (GlcNAc...) asparagine" evidence="5">
    <location>
        <position position="73"/>
    </location>
</feature>
<feature type="glycosylation site" description="N-linked (GlcNAc...) asparagine" evidence="5">
    <location>
        <position position="275"/>
    </location>
</feature>
<feature type="glycosylation site" description="N-linked (GlcNAc...) asparagine" evidence="5">
    <location>
        <position position="378"/>
    </location>
</feature>
<feature type="glycosylation site" description="N-linked (GlcNAc...) asparagine" evidence="5">
    <location>
        <position position="412"/>
    </location>
</feature>
<feature type="glycosylation site" description="N-linked (GlcNAc...) asparagine" evidence="5">
    <location>
        <position position="423"/>
    </location>
</feature>
<feature type="glycosylation site" description="N-linked (GlcNAc...) asparagine" evidence="5">
    <location>
        <position position="430"/>
    </location>
</feature>
<feature type="glycosylation site" description="N-linked (GlcNAc...) asparagine" evidence="5">
    <location>
        <position position="546"/>
    </location>
</feature>
<feature type="glycosylation site" description="N-linked (GlcNAc...) asparagine" evidence="5">
    <location>
        <position position="751"/>
    </location>
</feature>
<feature type="disulfide bond" evidence="2">
    <location>
        <begin position="96"/>
        <end position="347"/>
    </location>
</feature>
<feature type="disulfide bond" evidence="3">
    <location>
        <begin position="750"/>
        <end position="804"/>
    </location>
</feature>
<gene>
    <name evidence="9" type="primary">grik2</name>
</gene>
<accession>A0A2R8QF68</accession>
<organism evidence="10">
    <name type="scientific">Danio rerio</name>
    <name type="common">Zebrafish</name>
    <name type="synonym">Brachydanio rerio</name>
    <dbReference type="NCBI Taxonomy" id="7955"/>
    <lineage>
        <taxon>Eukaryota</taxon>
        <taxon>Metazoa</taxon>
        <taxon>Chordata</taxon>
        <taxon>Craniata</taxon>
        <taxon>Vertebrata</taxon>
        <taxon>Euteleostomi</taxon>
        <taxon>Actinopterygii</taxon>
        <taxon>Neopterygii</taxon>
        <taxon>Teleostei</taxon>
        <taxon>Ostariophysi</taxon>
        <taxon>Cypriniformes</taxon>
        <taxon>Danionidae</taxon>
        <taxon>Danioninae</taxon>
        <taxon>Danio</taxon>
    </lineage>
</organism>
<protein>
    <recommendedName>
        <fullName evidence="8">Glutamate receptor ionotropic, kainate 2</fullName>
        <shortName evidence="7">GluK2</shortName>
    </recommendedName>
</protein>
<dbReference type="EMBL" id="CABZ01076436">
    <property type="status" value="NOT_ANNOTATED_CDS"/>
    <property type="molecule type" value="Genomic_DNA"/>
</dbReference>
<dbReference type="EMBL" id="CABZ01076437">
    <property type="status" value="NOT_ANNOTATED_CDS"/>
    <property type="molecule type" value="Genomic_DNA"/>
</dbReference>
<dbReference type="EMBL" id="CABZ01076438">
    <property type="status" value="NOT_ANNOTATED_CDS"/>
    <property type="molecule type" value="Genomic_DNA"/>
</dbReference>
<dbReference type="EMBL" id="CABZ01076439">
    <property type="status" value="NOT_ANNOTATED_CDS"/>
    <property type="molecule type" value="Genomic_DNA"/>
</dbReference>
<dbReference type="EMBL" id="CABZ01076440">
    <property type="status" value="NOT_ANNOTATED_CDS"/>
    <property type="molecule type" value="Genomic_DNA"/>
</dbReference>
<dbReference type="EMBL" id="CABZ01076441">
    <property type="status" value="NOT_ANNOTATED_CDS"/>
    <property type="molecule type" value="Genomic_DNA"/>
</dbReference>
<dbReference type="EMBL" id="CABZ01076442">
    <property type="status" value="NOT_ANNOTATED_CDS"/>
    <property type="molecule type" value="Genomic_DNA"/>
</dbReference>
<dbReference type="EMBL" id="CABZ01085971">
    <property type="status" value="NOT_ANNOTATED_CDS"/>
    <property type="molecule type" value="Genomic_DNA"/>
</dbReference>
<dbReference type="EMBL" id="CABZ01085972">
    <property type="status" value="NOT_ANNOTATED_CDS"/>
    <property type="molecule type" value="Genomic_DNA"/>
</dbReference>
<dbReference type="EMBL" id="LO018531">
    <property type="status" value="NOT_ANNOTATED_CDS"/>
    <property type="molecule type" value="Genomic_DNA"/>
</dbReference>
<dbReference type="RefSeq" id="NP_001410875.1">
    <property type="nucleotide sequence ID" value="NM_001423946.1"/>
</dbReference>
<dbReference type="RefSeq" id="XP_021322473.1">
    <property type="nucleotide sequence ID" value="XM_021466798.2"/>
</dbReference>
<dbReference type="SMR" id="A0A2R8QF68"/>
<dbReference type="FunCoup" id="A0A2R8QF68">
    <property type="interactions" value="319"/>
</dbReference>
<dbReference type="STRING" id="7955.ENSDARP00000149888"/>
<dbReference type="GlyCosmos" id="A0A2R8QF68">
    <property type="glycosylation" value="9 sites, No reported glycans"/>
</dbReference>
<dbReference type="PaxDb" id="7955-ENSDARP00000101999"/>
<dbReference type="Ensembl" id="ENSDART00000180026">
    <property type="protein sequence ID" value="ENSDARP00000152462"/>
    <property type="gene ID" value="ENSDARG00000113771"/>
</dbReference>
<dbReference type="Ensembl" id="ENSDART00000183974">
    <property type="protein sequence ID" value="ENSDARP00000149888"/>
    <property type="gene ID" value="ENSDARG00000113771"/>
</dbReference>
<dbReference type="GeneID" id="556013"/>
<dbReference type="InParanoid" id="A0A2R8QF68"/>
<dbReference type="OMA" id="QCKFRVI"/>
<dbReference type="OrthoDB" id="5984008at2759"/>
<dbReference type="Proteomes" id="UP000000437">
    <property type="component" value="Chromosome 16"/>
</dbReference>
<dbReference type="Bgee" id="ENSDARG00000113771">
    <property type="expression patterns" value="Expressed in brain and 6 other cell types or tissues"/>
</dbReference>
<dbReference type="GO" id="GO:0032983">
    <property type="term" value="C:kainate selective glutamate receptor complex"/>
    <property type="evidence" value="ECO:0000318"/>
    <property type="project" value="GO_Central"/>
</dbReference>
<dbReference type="GO" id="GO:0005886">
    <property type="term" value="C:plasma membrane"/>
    <property type="evidence" value="ECO:0000250"/>
    <property type="project" value="UniProtKB"/>
</dbReference>
<dbReference type="GO" id="GO:0098839">
    <property type="term" value="C:postsynaptic density membrane"/>
    <property type="evidence" value="ECO:0000318"/>
    <property type="project" value="GO_Central"/>
</dbReference>
<dbReference type="GO" id="GO:0042734">
    <property type="term" value="C:presynaptic membrane"/>
    <property type="evidence" value="ECO:0000318"/>
    <property type="project" value="GO_Central"/>
</dbReference>
<dbReference type="GO" id="GO:0022849">
    <property type="term" value="F:glutamate-gated calcium ion channel activity"/>
    <property type="evidence" value="ECO:0000250"/>
    <property type="project" value="UniProtKB"/>
</dbReference>
<dbReference type="GO" id="GO:0015277">
    <property type="term" value="F:kainate selective glutamate receptor activity"/>
    <property type="evidence" value="ECO:0000250"/>
    <property type="project" value="UniProtKB"/>
</dbReference>
<dbReference type="GO" id="GO:1904315">
    <property type="term" value="F:transmitter-gated monoatomic ion channel activity involved in regulation of postsynaptic membrane potential"/>
    <property type="evidence" value="ECO:0000318"/>
    <property type="project" value="GO_Central"/>
</dbReference>
<dbReference type="GO" id="GO:0050804">
    <property type="term" value="P:modulation of chemical synaptic transmission"/>
    <property type="evidence" value="ECO:0000318"/>
    <property type="project" value="GO_Central"/>
</dbReference>
<dbReference type="GO" id="GO:0035249">
    <property type="term" value="P:synaptic transmission, glutamatergic"/>
    <property type="evidence" value="ECO:0000318"/>
    <property type="project" value="GO_Central"/>
</dbReference>
<dbReference type="CDD" id="cd06382">
    <property type="entry name" value="PBP1_iGluR_Kainate"/>
    <property type="match status" value="1"/>
</dbReference>
<dbReference type="FunFam" id="3.40.50.2300:FF:000010">
    <property type="entry name" value="Glutamate ionotropic receptor kainate type subunit 1"/>
    <property type="match status" value="1"/>
</dbReference>
<dbReference type="FunFam" id="3.40.190.10:FF:000240">
    <property type="entry name" value="Glutamate receptor ionotropic, kainate 2"/>
    <property type="match status" value="1"/>
</dbReference>
<dbReference type="FunFam" id="3.40.190.10:FF:000072">
    <property type="entry name" value="glutamate receptor ionotropic, kainate 4"/>
    <property type="match status" value="1"/>
</dbReference>
<dbReference type="FunFam" id="1.10.287.70:FF:000010">
    <property type="entry name" value="Putative glutamate receptor ionotropic kainate 1"/>
    <property type="match status" value="1"/>
</dbReference>
<dbReference type="Gene3D" id="1.10.287.70">
    <property type="match status" value="1"/>
</dbReference>
<dbReference type="Gene3D" id="3.40.50.2300">
    <property type="match status" value="2"/>
</dbReference>
<dbReference type="Gene3D" id="3.40.190.10">
    <property type="entry name" value="Periplasmic binding protein-like II"/>
    <property type="match status" value="1"/>
</dbReference>
<dbReference type="InterPro" id="IPR001828">
    <property type="entry name" value="ANF_lig-bd_rcpt"/>
</dbReference>
<dbReference type="InterPro" id="IPR019594">
    <property type="entry name" value="Glu/Gly-bd"/>
</dbReference>
<dbReference type="InterPro" id="IPR001508">
    <property type="entry name" value="Iono_Glu_rcpt_met"/>
</dbReference>
<dbReference type="InterPro" id="IPR015683">
    <property type="entry name" value="Ionotropic_Glu_rcpt"/>
</dbReference>
<dbReference type="InterPro" id="IPR001320">
    <property type="entry name" value="Iontro_rcpt_C"/>
</dbReference>
<dbReference type="InterPro" id="IPR028082">
    <property type="entry name" value="Peripla_BP_I"/>
</dbReference>
<dbReference type="PANTHER" id="PTHR18966">
    <property type="entry name" value="IONOTROPIC GLUTAMATE RECEPTOR"/>
    <property type="match status" value="1"/>
</dbReference>
<dbReference type="Pfam" id="PF01094">
    <property type="entry name" value="ANF_receptor"/>
    <property type="match status" value="1"/>
</dbReference>
<dbReference type="Pfam" id="PF00060">
    <property type="entry name" value="Lig_chan"/>
    <property type="match status" value="1"/>
</dbReference>
<dbReference type="Pfam" id="PF10613">
    <property type="entry name" value="Lig_chan-Glu_bd"/>
    <property type="match status" value="1"/>
</dbReference>
<dbReference type="PRINTS" id="PR00177">
    <property type="entry name" value="NMDARECEPTOR"/>
</dbReference>
<dbReference type="SMART" id="SM00918">
    <property type="entry name" value="Lig_chan-Glu_bd"/>
    <property type="match status" value="1"/>
</dbReference>
<dbReference type="SMART" id="SM00079">
    <property type="entry name" value="PBPe"/>
    <property type="match status" value="1"/>
</dbReference>
<dbReference type="SUPFAM" id="SSF53822">
    <property type="entry name" value="Periplasmic binding protein-like I"/>
    <property type="match status" value="1"/>
</dbReference>
<dbReference type="SUPFAM" id="SSF53850">
    <property type="entry name" value="Periplasmic binding protein-like II"/>
    <property type="match status" value="1"/>
</dbReference>
<proteinExistence type="inferred from homology"/>
<keyword id="KW-1003">Cell membrane</keyword>
<keyword id="KW-1015">Disulfide bond</keyword>
<keyword id="KW-0325">Glycoprotein</keyword>
<keyword id="KW-0407">Ion channel</keyword>
<keyword id="KW-0406">Ion transport</keyword>
<keyword id="KW-1071">Ligand-gated ion channel</keyword>
<keyword id="KW-0472">Membrane</keyword>
<keyword id="KW-0628">Postsynaptic cell membrane</keyword>
<keyword id="KW-0675">Receptor</keyword>
<keyword id="KW-1185">Reference proteome</keyword>
<keyword id="KW-0732">Signal</keyword>
<keyword id="KW-0770">Synapse</keyword>
<keyword id="KW-0812">Transmembrane</keyword>
<keyword id="KW-1133">Transmembrane helix</keyword>
<keyword id="KW-0813">Transport</keyword>